<name>MAST_POLMJ</name>
<reference key="1">
    <citation type="journal article" date="2007" name="J. Pept. Sci.">
        <title>Identification of three novel peptides isolated from the venom of the neotropical social wasp Polistes major major.</title>
        <authorList>
            <person name="Cerovsky V."/>
            <person name="Pohl J."/>
            <person name="Yang Z."/>
            <person name="Alam N."/>
            <person name="Attygalle A.B."/>
        </authorList>
    </citation>
    <scope>PROTEIN SEQUENCE</scope>
    <scope>SUBCELLULAR LOCATION</scope>
    <scope>MASS SPECTROMETRY</scope>
    <scope>AMIDATION AT LEU-17</scope>
    <source>
        <strain>Subsp. major</strain>
        <tissue>Venom</tissue>
    </source>
</reference>
<reference key="2">
    <citation type="journal article" date="2008" name="Peptides">
        <title>New potent antimicrobial peptides from the venom of Polistinae wasps and their analogs.</title>
        <authorList>
            <person name="Cerovsky V."/>
            <person name="Slaninova J."/>
            <person name="Fucik V."/>
            <person name="Hulacova H."/>
            <person name="Borovickova L."/>
            <person name="Jezek R."/>
            <person name="Bednarova L."/>
        </authorList>
    </citation>
    <scope>FUNCTION</scope>
    <scope>SYNTHESIS</scope>
</reference>
<dbReference type="GO" id="GO:0005576">
    <property type="term" value="C:extracellular region"/>
    <property type="evidence" value="ECO:0000314"/>
    <property type="project" value="UniProtKB"/>
</dbReference>
<dbReference type="GO" id="GO:0016020">
    <property type="term" value="C:membrane"/>
    <property type="evidence" value="ECO:0007669"/>
    <property type="project" value="UniProtKB-KW"/>
</dbReference>
<dbReference type="GO" id="GO:0044218">
    <property type="term" value="C:other organism cell membrane"/>
    <property type="evidence" value="ECO:0007669"/>
    <property type="project" value="UniProtKB-KW"/>
</dbReference>
<dbReference type="GO" id="GO:0090729">
    <property type="term" value="F:toxin activity"/>
    <property type="evidence" value="ECO:0007669"/>
    <property type="project" value="UniProtKB-KW"/>
</dbReference>
<dbReference type="GO" id="GO:0042742">
    <property type="term" value="P:defense response to bacterium"/>
    <property type="evidence" value="ECO:0007669"/>
    <property type="project" value="UniProtKB-KW"/>
</dbReference>
<dbReference type="GO" id="GO:0045087">
    <property type="term" value="P:innate immune response"/>
    <property type="evidence" value="ECO:0007669"/>
    <property type="project" value="UniProtKB-KW"/>
</dbReference>
<proteinExistence type="evidence at protein level"/>
<feature type="peptide" id="PRO_0000371797" description="Mastoparan-like PMM" evidence="4">
    <location>
        <begin position="1"/>
        <end position="17"/>
    </location>
</feature>
<feature type="modified residue" description="Leucine amide" evidence="4">
    <location>
        <position position="17"/>
    </location>
</feature>
<accession>P85874</accession>
<keyword id="KW-0027">Amidation</keyword>
<keyword id="KW-0044">Antibiotic</keyword>
<keyword id="KW-0929">Antimicrobial</keyword>
<keyword id="KW-0903">Direct protein sequencing</keyword>
<keyword id="KW-1213">G-protein coupled receptor impairing toxin</keyword>
<keyword id="KW-0391">Immunity</keyword>
<keyword id="KW-0399">Innate immunity</keyword>
<keyword id="KW-0467">Mast cell degranulation</keyword>
<keyword id="KW-0472">Membrane</keyword>
<keyword id="KW-0964">Secreted</keyword>
<keyword id="KW-1052">Target cell membrane</keyword>
<keyword id="KW-1053">Target membrane</keyword>
<keyword id="KW-0800">Toxin</keyword>
<protein>
    <recommendedName>
        <fullName evidence="7">Mastoparan-like PMM</fullName>
    </recommendedName>
    <alternativeName>
        <fullName evidence="6">Mastoparan-like peptide PMM2</fullName>
    </alternativeName>
</protein>
<sequence length="17" mass="1911">INWKKIASIGKEVLKAL</sequence>
<evidence type="ECO:0000250" key="1">
    <source>
        <dbReference type="UniProtKB" id="P01514"/>
    </source>
</evidence>
<evidence type="ECO:0000250" key="2">
    <source>
        <dbReference type="UniProtKB" id="P84914"/>
    </source>
</evidence>
<evidence type="ECO:0000255" key="3"/>
<evidence type="ECO:0000269" key="4">
    <source>
    </source>
</evidence>
<evidence type="ECO:0000269" key="5">
    <source>
    </source>
</evidence>
<evidence type="ECO:0000303" key="6">
    <source>
    </source>
</evidence>
<evidence type="ECO:0000303" key="7">
    <source>
    </source>
</evidence>
<evidence type="ECO:0000305" key="8"/>
<evidence type="ECO:0000305" key="9">
    <source>
    </source>
</evidence>
<evidence type="ECO:0000305" key="10">
    <source>
    </source>
</evidence>
<comment type="function">
    <text evidence="1 2 5">Antimicrobial and mast cell degranulat peptide. Has activity against both Gram-positive and -negative bacteria (B.subtilis (MIC=25.8 uM), E.coli (MIC=7.3 uM)). Shows mast cell degranulation activity (EC(50)=15-26 uM). Has low hemolytic activity (IC(50)=80 uM) (PubMed:18375018). Its mast cell degranulation activity may be related to the activation of G-protein coupled receptors in mast cells as well as interaction with other proteins located in cell endosomal membranes in the mast cells (By similarity).</text>
</comment>
<comment type="subcellular location">
    <subcellularLocation>
        <location evidence="4">Secreted</location>
    </subcellularLocation>
    <subcellularLocation>
        <location evidence="8">Target cell membrane</location>
    </subcellularLocation>
    <text evidence="10">Assumes an amphipathic alpha-helical conformation in a membrane-like environment.</text>
</comment>
<comment type="tissue specificity">
    <text evidence="9">Expressed by the venom gland.</text>
</comment>
<comment type="mass spectrometry" mass="1909.9" method="MALDI" evidence="4"/>
<comment type="miscellaneous">
    <text evidence="5">Most of synthetic analogs show a decreased antimicrobial and hemolytic activity.</text>
</comment>
<comment type="similarity">
    <text evidence="3">Belongs to the MCD family. Mastoparan subfamily.</text>
</comment>
<organism>
    <name type="scientific">Polistes major</name>
    <name type="common">Horse paper wasp</name>
    <dbReference type="NCBI Taxonomy" id="91420"/>
    <lineage>
        <taxon>Eukaryota</taxon>
        <taxon>Metazoa</taxon>
        <taxon>Ecdysozoa</taxon>
        <taxon>Arthropoda</taxon>
        <taxon>Hexapoda</taxon>
        <taxon>Insecta</taxon>
        <taxon>Pterygota</taxon>
        <taxon>Neoptera</taxon>
        <taxon>Endopterygota</taxon>
        <taxon>Hymenoptera</taxon>
        <taxon>Apocrita</taxon>
        <taxon>Aculeata</taxon>
        <taxon>Vespoidea</taxon>
        <taxon>Vespidae</taxon>
        <taxon>Polistinae</taxon>
        <taxon>Polistini</taxon>
        <taxon>Polistes</taxon>
    </lineage>
</organism>